<reference key="1">
    <citation type="journal article" date="1999" name="Nat. Genet.">
        <title>Comparative genomes of Chlamydia pneumoniae and C. trachomatis.</title>
        <authorList>
            <person name="Kalman S."/>
            <person name="Mitchell W.P."/>
            <person name="Marathe R."/>
            <person name="Lammel C.J."/>
            <person name="Fan J."/>
            <person name="Hyman R.W."/>
            <person name="Olinger L."/>
            <person name="Grimwood J."/>
            <person name="Davis R.W."/>
            <person name="Stephens R.S."/>
        </authorList>
    </citation>
    <scope>NUCLEOTIDE SEQUENCE [LARGE SCALE GENOMIC DNA]</scope>
    <source>
        <strain>CWL029</strain>
    </source>
</reference>
<reference key="2">
    <citation type="journal article" date="2000" name="Nucleic Acids Res.">
        <title>Genome sequences of Chlamydia trachomatis MoPn and Chlamydia pneumoniae AR39.</title>
        <authorList>
            <person name="Read T.D."/>
            <person name="Brunham R.C."/>
            <person name="Shen C."/>
            <person name="Gill S.R."/>
            <person name="Heidelberg J.F."/>
            <person name="White O."/>
            <person name="Hickey E.K."/>
            <person name="Peterson J.D."/>
            <person name="Utterback T.R."/>
            <person name="Berry K.J."/>
            <person name="Bass S."/>
            <person name="Linher K.D."/>
            <person name="Weidman J.F."/>
            <person name="Khouri H.M."/>
            <person name="Craven B."/>
            <person name="Bowman C."/>
            <person name="Dodson R.J."/>
            <person name="Gwinn M.L."/>
            <person name="Nelson W.C."/>
            <person name="DeBoy R.T."/>
            <person name="Kolonay J.F."/>
            <person name="McClarty G."/>
            <person name="Salzberg S.L."/>
            <person name="Eisen J.A."/>
            <person name="Fraser C.M."/>
        </authorList>
    </citation>
    <scope>NUCLEOTIDE SEQUENCE [LARGE SCALE GENOMIC DNA]</scope>
    <source>
        <strain>AR39</strain>
    </source>
</reference>
<reference key="3">
    <citation type="journal article" date="2000" name="Nucleic Acids Res.">
        <title>Comparison of whole genome sequences of Chlamydia pneumoniae J138 from Japan and CWL029 from USA.</title>
        <authorList>
            <person name="Shirai M."/>
            <person name="Hirakawa H."/>
            <person name="Kimoto M."/>
            <person name="Tabuchi M."/>
            <person name="Kishi F."/>
            <person name="Ouchi K."/>
            <person name="Shiba T."/>
            <person name="Ishii K."/>
            <person name="Hattori M."/>
            <person name="Kuhara S."/>
            <person name="Nakazawa T."/>
        </authorList>
    </citation>
    <scope>NUCLEOTIDE SEQUENCE [LARGE SCALE GENOMIC DNA]</scope>
    <source>
        <strain>J138</strain>
    </source>
</reference>
<reference key="4">
    <citation type="submission" date="2002-05" db="EMBL/GenBank/DDBJ databases">
        <title>The genome sequence of Chlamydia pneumoniae TW183 and comparison with other Chlamydia strains based on whole genome sequence analysis.</title>
        <authorList>
            <person name="Geng M.M."/>
            <person name="Schuhmacher A."/>
            <person name="Muehldorfer I."/>
            <person name="Bensch K.W."/>
            <person name="Schaefer K.P."/>
            <person name="Schneider S."/>
            <person name="Pohl T."/>
            <person name="Essig A."/>
            <person name="Marre R."/>
            <person name="Melchers K."/>
        </authorList>
    </citation>
    <scope>NUCLEOTIDE SEQUENCE [LARGE SCALE GENOMIC DNA]</scope>
    <source>
        <strain>TW-183</strain>
    </source>
</reference>
<keyword id="KW-0687">Ribonucleoprotein</keyword>
<keyword id="KW-0689">Ribosomal protein</keyword>
<dbReference type="EMBL" id="AE001363">
    <property type="protein sequence ID" value="AAD18689.1"/>
    <property type="molecule type" value="Genomic_DNA"/>
</dbReference>
<dbReference type="EMBL" id="AE002161">
    <property type="protein sequence ID" value="AAF38075.1"/>
    <property type="molecule type" value="Genomic_DNA"/>
</dbReference>
<dbReference type="EMBL" id="BA000008">
    <property type="protein sequence ID" value="BAA98755.1"/>
    <property type="molecule type" value="Genomic_DNA"/>
</dbReference>
<dbReference type="EMBL" id="AE009440">
    <property type="protein sequence ID" value="AAP98499.1"/>
    <property type="status" value="ALT_INIT"/>
    <property type="molecule type" value="Genomic_DNA"/>
</dbReference>
<dbReference type="PIR" id="A86559">
    <property type="entry name" value="A86559"/>
</dbReference>
<dbReference type="PIR" id="F72065">
    <property type="entry name" value="F72065"/>
</dbReference>
<dbReference type="RefSeq" id="NP_224745.1">
    <property type="nucleotide sequence ID" value="NC_000922.1"/>
</dbReference>
<dbReference type="RefSeq" id="WP_010883187.1">
    <property type="nucleotide sequence ID" value="NZ_LN847257.1"/>
</dbReference>
<dbReference type="SMR" id="Q9Z803"/>
<dbReference type="STRING" id="406984.CPK_ORF01063"/>
<dbReference type="GeneID" id="45050593"/>
<dbReference type="KEGG" id="cpa:CP_0203"/>
<dbReference type="KEGG" id="cpj:rs10"/>
<dbReference type="KEGG" id="cpn:CPn_0549"/>
<dbReference type="KEGG" id="cpt:CpB0570"/>
<dbReference type="PATRIC" id="fig|115713.3.peg.609"/>
<dbReference type="eggNOG" id="COG0051">
    <property type="taxonomic scope" value="Bacteria"/>
</dbReference>
<dbReference type="HOGENOM" id="CLU_122625_1_3_0"/>
<dbReference type="OMA" id="VDIEIKM"/>
<dbReference type="OrthoDB" id="9804464at2"/>
<dbReference type="Proteomes" id="UP000000583">
    <property type="component" value="Chromosome"/>
</dbReference>
<dbReference type="Proteomes" id="UP000000801">
    <property type="component" value="Chromosome"/>
</dbReference>
<dbReference type="GO" id="GO:1990904">
    <property type="term" value="C:ribonucleoprotein complex"/>
    <property type="evidence" value="ECO:0007669"/>
    <property type="project" value="UniProtKB-KW"/>
</dbReference>
<dbReference type="GO" id="GO:0005840">
    <property type="term" value="C:ribosome"/>
    <property type="evidence" value="ECO:0007669"/>
    <property type="project" value="UniProtKB-KW"/>
</dbReference>
<dbReference type="GO" id="GO:0003735">
    <property type="term" value="F:structural constituent of ribosome"/>
    <property type="evidence" value="ECO:0007669"/>
    <property type="project" value="InterPro"/>
</dbReference>
<dbReference type="GO" id="GO:0000049">
    <property type="term" value="F:tRNA binding"/>
    <property type="evidence" value="ECO:0007669"/>
    <property type="project" value="UniProtKB-UniRule"/>
</dbReference>
<dbReference type="GO" id="GO:0006412">
    <property type="term" value="P:translation"/>
    <property type="evidence" value="ECO:0007669"/>
    <property type="project" value="UniProtKB-UniRule"/>
</dbReference>
<dbReference type="FunFam" id="3.30.70.600:FF:000001">
    <property type="entry name" value="30S ribosomal protein S10"/>
    <property type="match status" value="1"/>
</dbReference>
<dbReference type="Gene3D" id="3.30.70.600">
    <property type="entry name" value="Ribosomal protein S10 domain"/>
    <property type="match status" value="1"/>
</dbReference>
<dbReference type="HAMAP" id="MF_00508">
    <property type="entry name" value="Ribosomal_uS10"/>
    <property type="match status" value="1"/>
</dbReference>
<dbReference type="InterPro" id="IPR001848">
    <property type="entry name" value="Ribosomal_uS10"/>
</dbReference>
<dbReference type="InterPro" id="IPR018268">
    <property type="entry name" value="Ribosomal_uS10_CS"/>
</dbReference>
<dbReference type="InterPro" id="IPR027486">
    <property type="entry name" value="Ribosomal_uS10_dom"/>
</dbReference>
<dbReference type="InterPro" id="IPR036838">
    <property type="entry name" value="Ribosomal_uS10_dom_sf"/>
</dbReference>
<dbReference type="NCBIfam" id="NF001861">
    <property type="entry name" value="PRK00596.1"/>
    <property type="match status" value="1"/>
</dbReference>
<dbReference type="NCBIfam" id="TIGR01049">
    <property type="entry name" value="rpsJ_bact"/>
    <property type="match status" value="1"/>
</dbReference>
<dbReference type="PANTHER" id="PTHR11700">
    <property type="entry name" value="30S RIBOSOMAL PROTEIN S10 FAMILY MEMBER"/>
    <property type="match status" value="1"/>
</dbReference>
<dbReference type="Pfam" id="PF00338">
    <property type="entry name" value="Ribosomal_S10"/>
    <property type="match status" value="1"/>
</dbReference>
<dbReference type="PRINTS" id="PR00971">
    <property type="entry name" value="RIBOSOMALS10"/>
</dbReference>
<dbReference type="SMART" id="SM01403">
    <property type="entry name" value="Ribosomal_S10"/>
    <property type="match status" value="1"/>
</dbReference>
<dbReference type="SUPFAM" id="SSF54999">
    <property type="entry name" value="Ribosomal protein S10"/>
    <property type="match status" value="1"/>
</dbReference>
<dbReference type="PROSITE" id="PS00361">
    <property type="entry name" value="RIBOSOMAL_S10"/>
    <property type="match status" value="1"/>
</dbReference>
<sequence>MKQQKQKIRIRLKGFDQGQLDRSTADIVETAKRTGARVVGPIPLPTKREVYTVLRSPHVDKKSREQFEIRTHKRLVDILDPTGKTIDALKMLALPAGVDIKIKAA</sequence>
<protein>
    <recommendedName>
        <fullName evidence="1">Small ribosomal subunit protein uS10</fullName>
    </recommendedName>
    <alternativeName>
        <fullName evidence="2">30S ribosomal protein S10</fullName>
    </alternativeName>
</protein>
<name>RS10_CHLPN</name>
<feature type="chain" id="PRO_0000146517" description="Small ribosomal subunit protein uS10">
    <location>
        <begin position="1"/>
        <end position="105"/>
    </location>
</feature>
<proteinExistence type="inferred from homology"/>
<accession>Q9Z803</accession>
<accession>Q9JQI7</accession>
<organism>
    <name type="scientific">Chlamydia pneumoniae</name>
    <name type="common">Chlamydophila pneumoniae</name>
    <dbReference type="NCBI Taxonomy" id="83558"/>
    <lineage>
        <taxon>Bacteria</taxon>
        <taxon>Pseudomonadati</taxon>
        <taxon>Chlamydiota</taxon>
        <taxon>Chlamydiia</taxon>
        <taxon>Chlamydiales</taxon>
        <taxon>Chlamydiaceae</taxon>
        <taxon>Chlamydia/Chlamydophila group</taxon>
        <taxon>Chlamydia</taxon>
    </lineage>
</organism>
<comment type="function">
    <text evidence="1">Involved in the binding of tRNA to the ribosomes.</text>
</comment>
<comment type="subunit">
    <text evidence="1">Part of the 30S ribosomal subunit.</text>
</comment>
<comment type="similarity">
    <text evidence="1">Belongs to the universal ribosomal protein uS10 family.</text>
</comment>
<comment type="sequence caution" evidence="2">
    <conflict type="erroneous initiation">
        <sequence resource="EMBL-CDS" id="AAP98499"/>
    </conflict>
</comment>
<gene>
    <name evidence="1" type="primary">rpsJ</name>
    <name type="synonym">rs10</name>
    <name type="ordered locus">CPn_0549</name>
    <name type="ordered locus">CP_0203</name>
    <name type="ordered locus">CpB0570</name>
</gene>
<evidence type="ECO:0000255" key="1">
    <source>
        <dbReference type="HAMAP-Rule" id="MF_00508"/>
    </source>
</evidence>
<evidence type="ECO:0000305" key="2"/>